<dbReference type="SMR" id="C0HLF3"/>
<dbReference type="GO" id="GO:0005576">
    <property type="term" value="C:extracellular region"/>
    <property type="evidence" value="ECO:0000314"/>
    <property type="project" value="UniProtKB"/>
</dbReference>
<dbReference type="GO" id="GO:0019871">
    <property type="term" value="F:sodium channel inhibitor activity"/>
    <property type="evidence" value="ECO:0000314"/>
    <property type="project" value="UniProtKB"/>
</dbReference>
<dbReference type="GO" id="GO:0090729">
    <property type="term" value="F:toxin activity"/>
    <property type="evidence" value="ECO:0000314"/>
    <property type="project" value="UniProtKB"/>
</dbReference>
<dbReference type="GO" id="GO:0006952">
    <property type="term" value="P:defense response"/>
    <property type="evidence" value="ECO:0007669"/>
    <property type="project" value="InterPro"/>
</dbReference>
<dbReference type="GO" id="GO:0044493">
    <property type="term" value="P:envenomation resulting in negative regulation of voltage-gated sodium channel activity in another organism"/>
    <property type="evidence" value="ECO:0000314"/>
    <property type="project" value="UniProtKB"/>
</dbReference>
<dbReference type="CDD" id="cd23106">
    <property type="entry name" value="neurotoxins_LC_scorpion"/>
    <property type="match status" value="1"/>
</dbReference>
<dbReference type="FunFam" id="3.30.30.10:FF:000002">
    <property type="entry name" value="Alpha-like toxin BmK-M1"/>
    <property type="match status" value="1"/>
</dbReference>
<dbReference type="Gene3D" id="3.30.30.10">
    <property type="entry name" value="Knottin, scorpion toxin-like"/>
    <property type="match status" value="1"/>
</dbReference>
<dbReference type="InterPro" id="IPR044062">
    <property type="entry name" value="LCN-type_CS_alpha_beta_dom"/>
</dbReference>
<dbReference type="InterPro" id="IPR003614">
    <property type="entry name" value="Scorpion_toxin-like"/>
</dbReference>
<dbReference type="InterPro" id="IPR036574">
    <property type="entry name" value="Scorpion_toxin-like_sf"/>
</dbReference>
<dbReference type="InterPro" id="IPR018218">
    <property type="entry name" value="Scorpion_toxinL"/>
</dbReference>
<dbReference type="PRINTS" id="PR00285">
    <property type="entry name" value="SCORPNTOXIN"/>
</dbReference>
<dbReference type="SMART" id="SM00505">
    <property type="entry name" value="Knot1"/>
    <property type="match status" value="1"/>
</dbReference>
<dbReference type="SUPFAM" id="SSF57095">
    <property type="entry name" value="Scorpion toxin-like"/>
    <property type="match status" value="1"/>
</dbReference>
<dbReference type="PROSITE" id="PS51863">
    <property type="entry name" value="LCN_CSAB"/>
    <property type="match status" value="1"/>
</dbReference>
<feature type="chain" id="PRO_0000450096" description="Beta-mammal toxin Co2">
    <location>
        <begin position="1"/>
        <end position="66"/>
    </location>
</feature>
<feature type="domain" description="LCN-type CS-alpha/beta" evidence="1">
    <location>
        <begin position="1"/>
        <end position="66"/>
    </location>
</feature>
<feature type="disulfide bond" evidence="1">
    <location>
        <begin position="12"/>
        <end position="65"/>
    </location>
</feature>
<feature type="disulfide bond" evidence="1">
    <location>
        <begin position="16"/>
        <end position="41"/>
    </location>
</feature>
<feature type="disulfide bond" evidence="1">
    <location>
        <begin position="25"/>
        <end position="46"/>
    </location>
</feature>
<feature type="disulfide bond" evidence="1">
    <location>
        <begin position="29"/>
        <end position="48"/>
    </location>
</feature>
<organism evidence="3">
    <name type="scientific">Centruroides ornatus</name>
    <name type="common">Scorpion</name>
    <name type="synonym">Centruroides infamatus ornatus</name>
    <dbReference type="NCBI Taxonomy" id="2338500"/>
    <lineage>
        <taxon>Eukaryota</taxon>
        <taxon>Metazoa</taxon>
        <taxon>Ecdysozoa</taxon>
        <taxon>Arthropoda</taxon>
        <taxon>Chelicerata</taxon>
        <taxon>Arachnida</taxon>
        <taxon>Scorpiones</taxon>
        <taxon>Buthida</taxon>
        <taxon>Buthoidea</taxon>
        <taxon>Buthidae</taxon>
        <taxon>Centruroides</taxon>
    </lineage>
</organism>
<accession>C0HLF3</accession>
<sequence length="66" mass="7623">KEGYIVNYHDGCKYACVKLGDNDYCLRECKLRYGKGAGGYCYAFGCWCTHLYEQAVVWPLPKKRCN</sequence>
<reference evidence="4" key="1">
    <citation type="journal article" date="2020" name="Toxicon">
        <title>Biochemical characterization of the venom from the Mexican scorpion Centruroides ornatus, a dangerous species to humans.</title>
        <authorList>
            <person name="Garcia-Guerrero I.A."/>
            <person name="Carcamo-Noriega E."/>
            <person name="Gomez-Lagunas F."/>
            <person name="Gonzalez-Santillan E."/>
            <person name="Zamudio F.Z."/>
            <person name="Gurrola G.B."/>
            <person name="Possani L.D."/>
        </authorList>
    </citation>
    <scope>PROTEIN SEQUENCE</scope>
    <scope>FUNCTION</scope>
    <scope>SUBCELLULAR LOCATION</scope>
    <scope>MASS SPECTROMETRY</scope>
    <source>
        <tissue evidence="3">Venom</tissue>
    </source>
</reference>
<keyword id="KW-0903">Direct protein sequencing</keyword>
<keyword id="KW-1015">Disulfide bond</keyword>
<keyword id="KW-0872">Ion channel impairing toxin</keyword>
<keyword id="KW-0528">Neurotoxin</keyword>
<keyword id="KW-0964">Secreted</keyword>
<keyword id="KW-0800">Toxin</keyword>
<keyword id="KW-0738">Voltage-gated sodium channel impairing toxin</keyword>
<protein>
    <recommendedName>
        <fullName evidence="3">Beta-mammal toxin Co2</fullName>
    </recommendedName>
</protein>
<evidence type="ECO:0000255" key="1">
    <source>
        <dbReference type="PROSITE-ProRule" id="PRU01210"/>
    </source>
</evidence>
<evidence type="ECO:0000269" key="2">
    <source>
    </source>
</evidence>
<evidence type="ECO:0000303" key="3">
    <source>
    </source>
</evidence>
<evidence type="ECO:0000305" key="4"/>
<evidence type="ECO:0000305" key="5">
    <source>
    </source>
</evidence>
<name>SCX2_CENOR</name>
<comment type="function">
    <text evidence="2">Beta toxins bind voltage-independently at site-4 of sodium channels (Nav) and shift the voltage of activation toward more negative potentials thereby affecting sodium channel activation and promoting spontaneous and repetitive firing (PubMed:31734253). This toxin acts on human Nav1.1/SCN1A, Nav1.2/SCN2A, Nav1.4/SCN4A and Nav1.6/SCN8A voltage-gated sodium channels (PubMed:31734253). Also, it reduces the peak of sodium currents in Nav1.5/SCN5A at all potentials (PubMed:31734253). In vivo, is lethal to mice when intraperitoneally injected at a dose of 5ug (PubMed:31734253). No activity is observed when injected into crickets or woodlice (PubMed:31734253).</text>
</comment>
<comment type="subcellular location">
    <subcellularLocation>
        <location evidence="2">Secreted</location>
    </subcellularLocation>
</comment>
<comment type="tissue specificity">
    <text evidence="5">Expressed by the venom gland.</text>
</comment>
<comment type="domain">
    <text evidence="4">Has the structural arrangement of an alpha-helix connected to antiparallel beta-sheets by disulfide bonds (CS-alpha/beta).</text>
</comment>
<comment type="mass spectrometry" mass="7614.3" method="Electrospray" evidence="2"/>
<comment type="similarity">
    <text evidence="4">Belongs to the long (4 C-C) scorpion toxin superfamily. Sodium channel inhibitor family. Beta subfamily.</text>
</comment>
<proteinExistence type="evidence at protein level"/>